<evidence type="ECO:0000255" key="1"/>
<evidence type="ECO:0000269" key="2">
    <source>
    </source>
</evidence>
<evidence type="ECO:0000303" key="3">
    <source>
    </source>
</evidence>
<evidence type="ECO:0000305" key="4"/>
<gene>
    <name type="primary">ACTR3C</name>
    <name type="synonym">ARP11</name>
</gene>
<sequence length="210" mass="23712">MFESFNVPGLYIAVQAVLALAASWTSRQVGERTLTGIVIDSGDGVTHVIPVAEGYVIGSCIKHIPIAGRDITYFIQQLLREREVGIPPEQSLETAKAIKEKYCYICPDIVKEFAKYDVDPQKWIKQYTGINAINQKKFVIDVGYERFLGPEIFFHPEFANPDSMESISDVVDEVIQNCPIDVRRPLYKMEQIPLSYPQGHGFHPLSPPFH</sequence>
<comment type="function">
    <text evidence="2">May play a role in the suppression of metastatic potential in lung adenoma carcinoma cells.</text>
</comment>
<comment type="alternative products">
    <event type="alternative splicing"/>
    <isoform>
        <id>Q9C0K3-1</id>
        <name>1</name>
        <sequence type="displayed"/>
    </isoform>
    <isoform>
        <id>Q9C0K3-2</id>
        <name>2</name>
        <sequence type="described" ref="VSP_032218"/>
    </isoform>
</comment>
<comment type="tissue specificity">
    <text evidence="2">Expressed in kidney, stomach, spleen, bone marrow, uterus, testis, placenta, skeletal muscle, mammary gland, lung, fetal liver, and fetal kidney, but not detected in small intestine, brain, and thymus. Expressed in low-metastatic lung adenocarcinoma cells but not in high-metastatic ones.</text>
</comment>
<comment type="similarity">
    <text evidence="4">Belongs to the actin family.</text>
</comment>
<accession>Q9C0K3</accession>
<accession>Q5CZI4</accession>
<name>ARP3C_HUMAN</name>
<proteinExistence type="evidence at protein level"/>
<feature type="signal peptide" evidence="1">
    <location>
        <begin position="1"/>
        <end position="21"/>
    </location>
</feature>
<feature type="chain" id="PRO_0000324333" description="Actin-related protein 3C">
    <location>
        <begin position="22"/>
        <end position="210"/>
    </location>
</feature>
<feature type="splice variant" id="VSP_032218" description="In isoform 2." evidence="3">
    <location>
        <begin position="1"/>
        <end position="163"/>
    </location>
</feature>
<feature type="sequence conflict" description="In Ref. 2; CAI56711." evidence="4" ref="2">
    <original>M</original>
    <variation>V</variation>
    <location>
        <position position="189"/>
    </location>
</feature>
<dbReference type="EMBL" id="AB039791">
    <property type="protein sequence ID" value="BAB21501.1"/>
    <property type="molecule type" value="mRNA"/>
</dbReference>
<dbReference type="EMBL" id="BX640643">
    <property type="protein sequence ID" value="CAI56711.1"/>
    <property type="molecule type" value="mRNA"/>
</dbReference>
<dbReference type="CCDS" id="CCDS47744.1">
    <molecule id="Q9C0K3-1"/>
</dbReference>
<dbReference type="PIR" id="JC7580">
    <property type="entry name" value="JC7580"/>
</dbReference>
<dbReference type="RefSeq" id="NP_001157930.1">
    <molecule id="Q9C0K3-1"/>
    <property type="nucleotide sequence ID" value="NM_001164458.2"/>
</dbReference>
<dbReference type="RefSeq" id="NP_001157931.1">
    <molecule id="Q9C0K3-1"/>
    <property type="nucleotide sequence ID" value="NM_001164459.2"/>
</dbReference>
<dbReference type="RefSeq" id="XP_011514808.1">
    <molecule id="Q9C0K3-1"/>
    <property type="nucleotide sequence ID" value="XM_011516506.4"/>
</dbReference>
<dbReference type="RefSeq" id="XP_011514809.1">
    <molecule id="Q9C0K3-1"/>
    <property type="nucleotide sequence ID" value="XM_011516507.3"/>
</dbReference>
<dbReference type="RefSeq" id="XP_011514810.1">
    <molecule id="Q9C0K3-1"/>
    <property type="nucleotide sequence ID" value="XM_011516508.3"/>
</dbReference>
<dbReference type="RefSeq" id="XP_016868038.1">
    <property type="nucleotide sequence ID" value="XM_017012549.1"/>
</dbReference>
<dbReference type="SMR" id="Q9C0K3"/>
<dbReference type="BioGRID" id="576126">
    <property type="interactions" value="9"/>
</dbReference>
<dbReference type="FunCoup" id="Q9C0K3">
    <property type="interactions" value="499"/>
</dbReference>
<dbReference type="IntAct" id="Q9C0K3">
    <property type="interactions" value="6"/>
</dbReference>
<dbReference type="STRING" id="9606.ENSP00000252071"/>
<dbReference type="GlyGen" id="Q9C0K3">
    <property type="glycosylation" value="1 site, 1 O-linked glycan (1 site)"/>
</dbReference>
<dbReference type="iPTMnet" id="Q9C0K3"/>
<dbReference type="PhosphoSitePlus" id="Q9C0K3"/>
<dbReference type="BioMuta" id="ACTR3C"/>
<dbReference type="DMDM" id="74739414"/>
<dbReference type="jPOST" id="Q9C0K3"/>
<dbReference type="MassIVE" id="Q9C0K3"/>
<dbReference type="PaxDb" id="9606-ENSP00000252071"/>
<dbReference type="PeptideAtlas" id="Q9C0K3"/>
<dbReference type="ProteomicsDB" id="80071">
    <molecule id="Q9C0K3-1"/>
</dbReference>
<dbReference type="Pumba" id="Q9C0K3"/>
<dbReference type="Antibodypedia" id="66353">
    <property type="antibodies" value="6 antibodies from 6 providers"/>
</dbReference>
<dbReference type="DNASU" id="653857"/>
<dbReference type="Ensembl" id="ENST00000252071.8">
    <molecule id="Q9C0K3-1"/>
    <property type="protein sequence ID" value="ENSP00000252071.4"/>
    <property type="gene ID" value="ENSG00000106526.12"/>
</dbReference>
<dbReference type="Ensembl" id="ENST00000683684.1">
    <molecule id="Q9C0K3-1"/>
    <property type="protein sequence ID" value="ENSP00000507618.1"/>
    <property type="gene ID" value="ENSG00000106526.12"/>
</dbReference>
<dbReference type="GeneID" id="653857"/>
<dbReference type="KEGG" id="hsa:653857"/>
<dbReference type="MANE-Select" id="ENST00000683684.1">
    <property type="protein sequence ID" value="ENSP00000507618.1"/>
    <property type="RefSeq nucleotide sequence ID" value="NM_001164458.2"/>
    <property type="RefSeq protein sequence ID" value="NP_001157930.1"/>
</dbReference>
<dbReference type="UCSC" id="uc003wgu.3">
    <molecule id="Q9C0K3-1"/>
    <property type="organism name" value="human"/>
</dbReference>
<dbReference type="AGR" id="HGNC:37282"/>
<dbReference type="CTD" id="653857"/>
<dbReference type="DisGeNET" id="653857"/>
<dbReference type="GeneCards" id="ACTR3C"/>
<dbReference type="HGNC" id="HGNC:37282">
    <property type="gene designation" value="ACTR3C"/>
</dbReference>
<dbReference type="HPA" id="ENSG00000106526">
    <property type="expression patterns" value="Tissue enhanced (parathyroid)"/>
</dbReference>
<dbReference type="neXtProt" id="NX_Q9C0K3"/>
<dbReference type="OpenTargets" id="ENSG00000106526"/>
<dbReference type="PharmGKB" id="PA165617588"/>
<dbReference type="VEuPathDB" id="HostDB:ENSG00000106526"/>
<dbReference type="eggNOG" id="KOG0678">
    <property type="taxonomic scope" value="Eukaryota"/>
</dbReference>
<dbReference type="GeneTree" id="ENSGT00940000158304"/>
<dbReference type="InParanoid" id="Q9C0K3"/>
<dbReference type="OMA" id="PRILECW"/>
<dbReference type="OrthoDB" id="421448at2759"/>
<dbReference type="PAN-GO" id="Q9C0K3">
    <property type="GO annotations" value="2 GO annotations based on evolutionary models"/>
</dbReference>
<dbReference type="PhylomeDB" id="Q9C0K3"/>
<dbReference type="TreeFam" id="TF300644"/>
<dbReference type="PathwayCommons" id="Q9C0K3"/>
<dbReference type="SignaLink" id="Q9C0K3"/>
<dbReference type="BioGRID-ORCS" id="653857">
    <property type="hits" value="55 hits in 1078 CRISPR screens"/>
</dbReference>
<dbReference type="ChiTaRS" id="ACTR3C">
    <property type="organism name" value="human"/>
</dbReference>
<dbReference type="GenomeRNAi" id="653857"/>
<dbReference type="Pharos" id="Q9C0K3">
    <property type="development level" value="Tdark"/>
</dbReference>
<dbReference type="PRO" id="PR:Q9C0K3"/>
<dbReference type="Proteomes" id="UP000005640">
    <property type="component" value="Chromosome 7"/>
</dbReference>
<dbReference type="RNAct" id="Q9C0K3">
    <property type="molecule type" value="protein"/>
</dbReference>
<dbReference type="Bgee" id="ENSG00000106526">
    <property type="expression patterns" value="Expressed in right lobe of liver and 108 other cell types or tissues"/>
</dbReference>
<dbReference type="ExpressionAtlas" id="Q9C0K3">
    <property type="expression patterns" value="baseline and differential"/>
</dbReference>
<dbReference type="GO" id="GO:0070062">
    <property type="term" value="C:extracellular exosome"/>
    <property type="evidence" value="ECO:0007005"/>
    <property type="project" value="UniProtKB"/>
</dbReference>
<dbReference type="GO" id="GO:0003779">
    <property type="term" value="F:actin binding"/>
    <property type="evidence" value="ECO:0007669"/>
    <property type="project" value="UniProtKB-KW"/>
</dbReference>
<dbReference type="GO" id="GO:0005524">
    <property type="term" value="F:ATP binding"/>
    <property type="evidence" value="ECO:0007669"/>
    <property type="project" value="UniProtKB-KW"/>
</dbReference>
<dbReference type="FunFam" id="3.90.640.10:FF:000006">
    <property type="entry name" value="Actin-related protein 3 (ARP3)"/>
    <property type="match status" value="1"/>
</dbReference>
<dbReference type="Gene3D" id="3.30.420.40">
    <property type="match status" value="2"/>
</dbReference>
<dbReference type="Gene3D" id="3.90.640.10">
    <property type="entry name" value="Actin, Chain A, domain 4"/>
    <property type="match status" value="1"/>
</dbReference>
<dbReference type="InterPro" id="IPR004000">
    <property type="entry name" value="Actin"/>
</dbReference>
<dbReference type="InterPro" id="IPR043129">
    <property type="entry name" value="ATPase_NBD"/>
</dbReference>
<dbReference type="PANTHER" id="PTHR11937">
    <property type="entry name" value="ACTIN"/>
    <property type="match status" value="1"/>
</dbReference>
<dbReference type="Pfam" id="PF00022">
    <property type="entry name" value="Actin"/>
    <property type="match status" value="1"/>
</dbReference>
<dbReference type="SMART" id="SM00268">
    <property type="entry name" value="ACTIN"/>
    <property type="match status" value="1"/>
</dbReference>
<dbReference type="SUPFAM" id="SSF53067">
    <property type="entry name" value="Actin-like ATPase domain"/>
    <property type="match status" value="1"/>
</dbReference>
<organism>
    <name type="scientific">Homo sapiens</name>
    <name type="common">Human</name>
    <dbReference type="NCBI Taxonomy" id="9606"/>
    <lineage>
        <taxon>Eukaryota</taxon>
        <taxon>Metazoa</taxon>
        <taxon>Chordata</taxon>
        <taxon>Craniata</taxon>
        <taxon>Vertebrata</taxon>
        <taxon>Euteleostomi</taxon>
        <taxon>Mammalia</taxon>
        <taxon>Eutheria</taxon>
        <taxon>Euarchontoglires</taxon>
        <taxon>Primates</taxon>
        <taxon>Haplorrhini</taxon>
        <taxon>Catarrhini</taxon>
        <taxon>Hominidae</taxon>
        <taxon>Homo</taxon>
    </lineage>
</organism>
<reference key="1">
    <citation type="journal article" date="2001" name="Biochem. Biophys. Res. Commun.">
        <title>Isolation of a novel actin-related gene expressed in low-metastatic PC-14 human lung adenocarcinoma.</title>
        <authorList>
            <person name="Shindo-Okada N."/>
            <person name="Shimizu K."/>
        </authorList>
    </citation>
    <scope>NUCLEOTIDE SEQUENCE [MRNA] (ISOFORM 1)</scope>
    <scope>FUNCTION</scope>
    <scope>TISSUE SPECIFICITY</scope>
    <source>
        <tissue>Lung</tissue>
    </source>
</reference>
<reference key="2">
    <citation type="journal article" date="2007" name="BMC Genomics">
        <title>The full-ORF clone resource of the German cDNA consortium.</title>
        <authorList>
            <person name="Bechtel S."/>
            <person name="Rosenfelder H."/>
            <person name="Duda A."/>
            <person name="Schmidt C.P."/>
            <person name="Ernst U."/>
            <person name="Wellenreuther R."/>
            <person name="Mehrle A."/>
            <person name="Schuster C."/>
            <person name="Bahr A."/>
            <person name="Bloecker H."/>
            <person name="Heubner D."/>
            <person name="Hoerlein A."/>
            <person name="Michel G."/>
            <person name="Wedler H."/>
            <person name="Koehrer K."/>
            <person name="Ottenwaelder B."/>
            <person name="Poustka A."/>
            <person name="Wiemann S."/>
            <person name="Schupp I."/>
        </authorList>
    </citation>
    <scope>NUCLEOTIDE SEQUENCE [LARGE SCALE MRNA] (ISOFORM 2)</scope>
    <source>
        <tissue>Fetal kidney</tissue>
    </source>
</reference>
<keyword id="KW-0009">Actin-binding</keyword>
<keyword id="KW-0025">Alternative splicing</keyword>
<keyword id="KW-0067">ATP-binding</keyword>
<keyword id="KW-0547">Nucleotide-binding</keyword>
<keyword id="KW-1267">Proteomics identification</keyword>
<keyword id="KW-1185">Reference proteome</keyword>
<keyword id="KW-0732">Signal</keyword>
<protein>
    <recommendedName>
        <fullName>Actin-related protein 3C</fullName>
    </recommendedName>
    <alternativeName>
        <fullName>Actin-related protein 11</fullName>
    </alternativeName>
</protein>